<organism>
    <name type="scientific">Bartonella tribocorum (strain CIP 105476 / IBS 506)</name>
    <dbReference type="NCBI Taxonomy" id="382640"/>
    <lineage>
        <taxon>Bacteria</taxon>
        <taxon>Pseudomonadati</taxon>
        <taxon>Pseudomonadota</taxon>
        <taxon>Alphaproteobacteria</taxon>
        <taxon>Hyphomicrobiales</taxon>
        <taxon>Bartonellaceae</taxon>
        <taxon>Bartonella</taxon>
    </lineage>
</organism>
<feature type="chain" id="PRO_1000077081" description="tRNA pseudouridine synthase A">
    <location>
        <begin position="1"/>
        <end position="247"/>
    </location>
</feature>
<feature type="active site" description="Nucleophile" evidence="1">
    <location>
        <position position="52"/>
    </location>
</feature>
<feature type="binding site" evidence="1">
    <location>
        <position position="113"/>
    </location>
    <ligand>
        <name>substrate</name>
    </ligand>
</feature>
<accession>A9ILJ7</accession>
<sequence length="247" mass="27997">MSRFKLTLEYDGSNYAGWQRQAKLHTIQGALEQAIFRFSGQQLTITTAGRTDAGVHATGQVAHVDFIKNWPPHTVRDALNALLRQQSEAISILNVENVPDDFDARFSAIKRHYLFKILNRRSPPALNAKRVWWIPKPLNAQAMHEAAQKLVGQHDFTTFRSAHCQAKSPIRTLERLDIQKEGEEIFIYAKARSFLHHQIRSFAGSLMEVGIGRWTAQDLEAALHAKDRKRCGVVAPPSGLYLTKVEY</sequence>
<gene>
    <name evidence="1" type="primary">truA</name>
    <name type="ordered locus">BT_0077</name>
</gene>
<protein>
    <recommendedName>
        <fullName evidence="1">tRNA pseudouridine synthase A</fullName>
        <ecNumber evidence="1">5.4.99.12</ecNumber>
    </recommendedName>
    <alternativeName>
        <fullName evidence="1">tRNA pseudouridine(38-40) synthase</fullName>
    </alternativeName>
    <alternativeName>
        <fullName evidence="1">tRNA pseudouridylate synthase I</fullName>
    </alternativeName>
    <alternativeName>
        <fullName evidence="1">tRNA-uridine isomerase I</fullName>
    </alternativeName>
</protein>
<dbReference type="EC" id="5.4.99.12" evidence="1"/>
<dbReference type="EMBL" id="AM260525">
    <property type="protein sequence ID" value="CAK00573.1"/>
    <property type="molecule type" value="Genomic_DNA"/>
</dbReference>
<dbReference type="RefSeq" id="WP_012230389.1">
    <property type="nucleotide sequence ID" value="NC_010161.1"/>
</dbReference>
<dbReference type="SMR" id="A9ILJ7"/>
<dbReference type="KEGG" id="btr:BT_0077"/>
<dbReference type="eggNOG" id="COG0101">
    <property type="taxonomic scope" value="Bacteria"/>
</dbReference>
<dbReference type="HOGENOM" id="CLU_014673_0_2_5"/>
<dbReference type="Proteomes" id="UP000001592">
    <property type="component" value="Chromosome"/>
</dbReference>
<dbReference type="GO" id="GO:0003723">
    <property type="term" value="F:RNA binding"/>
    <property type="evidence" value="ECO:0007669"/>
    <property type="project" value="InterPro"/>
</dbReference>
<dbReference type="GO" id="GO:0160147">
    <property type="term" value="F:tRNA pseudouridine(38-40) synthase activity"/>
    <property type="evidence" value="ECO:0007669"/>
    <property type="project" value="UniProtKB-EC"/>
</dbReference>
<dbReference type="GO" id="GO:0031119">
    <property type="term" value="P:tRNA pseudouridine synthesis"/>
    <property type="evidence" value="ECO:0007669"/>
    <property type="project" value="UniProtKB-UniRule"/>
</dbReference>
<dbReference type="CDD" id="cd02570">
    <property type="entry name" value="PseudoU_synth_EcTruA"/>
    <property type="match status" value="1"/>
</dbReference>
<dbReference type="FunFam" id="3.30.70.580:FF:000001">
    <property type="entry name" value="tRNA pseudouridine synthase A"/>
    <property type="match status" value="1"/>
</dbReference>
<dbReference type="Gene3D" id="3.30.70.660">
    <property type="entry name" value="Pseudouridine synthase I, catalytic domain, C-terminal subdomain"/>
    <property type="match status" value="1"/>
</dbReference>
<dbReference type="Gene3D" id="3.30.70.580">
    <property type="entry name" value="Pseudouridine synthase I, catalytic domain, N-terminal subdomain"/>
    <property type="match status" value="1"/>
</dbReference>
<dbReference type="HAMAP" id="MF_00171">
    <property type="entry name" value="TruA"/>
    <property type="match status" value="1"/>
</dbReference>
<dbReference type="InterPro" id="IPR020103">
    <property type="entry name" value="PsdUridine_synth_cat_dom_sf"/>
</dbReference>
<dbReference type="InterPro" id="IPR001406">
    <property type="entry name" value="PsdUridine_synth_TruA"/>
</dbReference>
<dbReference type="InterPro" id="IPR020097">
    <property type="entry name" value="PsdUridine_synth_TruA_a/b_dom"/>
</dbReference>
<dbReference type="InterPro" id="IPR020095">
    <property type="entry name" value="PsdUridine_synth_TruA_C"/>
</dbReference>
<dbReference type="InterPro" id="IPR020094">
    <property type="entry name" value="TruA/RsuA/RluB/E/F_N"/>
</dbReference>
<dbReference type="NCBIfam" id="TIGR00071">
    <property type="entry name" value="hisT_truA"/>
    <property type="match status" value="1"/>
</dbReference>
<dbReference type="PANTHER" id="PTHR11142">
    <property type="entry name" value="PSEUDOURIDYLATE SYNTHASE"/>
    <property type="match status" value="1"/>
</dbReference>
<dbReference type="PANTHER" id="PTHR11142:SF0">
    <property type="entry name" value="TRNA PSEUDOURIDINE SYNTHASE-LIKE 1"/>
    <property type="match status" value="1"/>
</dbReference>
<dbReference type="Pfam" id="PF01416">
    <property type="entry name" value="PseudoU_synth_1"/>
    <property type="match status" value="2"/>
</dbReference>
<dbReference type="PIRSF" id="PIRSF001430">
    <property type="entry name" value="tRNA_psdUrid_synth"/>
    <property type="match status" value="1"/>
</dbReference>
<dbReference type="SUPFAM" id="SSF55120">
    <property type="entry name" value="Pseudouridine synthase"/>
    <property type="match status" value="1"/>
</dbReference>
<comment type="function">
    <text evidence="1">Formation of pseudouridine at positions 38, 39 and 40 in the anticodon stem and loop of transfer RNAs.</text>
</comment>
<comment type="catalytic activity">
    <reaction evidence="1">
        <text>uridine(38/39/40) in tRNA = pseudouridine(38/39/40) in tRNA</text>
        <dbReference type="Rhea" id="RHEA:22376"/>
        <dbReference type="Rhea" id="RHEA-COMP:10085"/>
        <dbReference type="Rhea" id="RHEA-COMP:10087"/>
        <dbReference type="ChEBI" id="CHEBI:65314"/>
        <dbReference type="ChEBI" id="CHEBI:65315"/>
        <dbReference type="EC" id="5.4.99.12"/>
    </reaction>
</comment>
<comment type="subunit">
    <text evidence="1">Homodimer.</text>
</comment>
<comment type="similarity">
    <text evidence="1">Belongs to the tRNA pseudouridine synthase TruA family.</text>
</comment>
<name>TRUA_BART1</name>
<reference key="1">
    <citation type="journal article" date="2007" name="Nat. Genet.">
        <title>Genomic analysis of Bartonella identifies type IV secretion systems as host adaptability factors.</title>
        <authorList>
            <person name="Saenz H.L."/>
            <person name="Engel P."/>
            <person name="Stoeckli M.C."/>
            <person name="Lanz C."/>
            <person name="Raddatz G."/>
            <person name="Vayssier-Taussat M."/>
            <person name="Birtles R."/>
            <person name="Schuster S.C."/>
            <person name="Dehio C."/>
        </authorList>
    </citation>
    <scope>NUCLEOTIDE SEQUENCE [LARGE SCALE GENOMIC DNA]</scope>
    <source>
        <strain>CIP 105476 / IBS 506</strain>
    </source>
</reference>
<keyword id="KW-0413">Isomerase</keyword>
<keyword id="KW-0819">tRNA processing</keyword>
<evidence type="ECO:0000255" key="1">
    <source>
        <dbReference type="HAMAP-Rule" id="MF_00171"/>
    </source>
</evidence>
<proteinExistence type="inferred from homology"/>